<proteinExistence type="evidence at protein level"/>
<organism>
    <name type="scientific">Hydrolagus colliei</name>
    <name type="common">Spotted ratfish</name>
    <name type="synonym">Chimaera colliei</name>
    <dbReference type="NCBI Taxonomy" id="7873"/>
    <lineage>
        <taxon>Eukaryota</taxon>
        <taxon>Metazoa</taxon>
        <taxon>Chordata</taxon>
        <taxon>Craniata</taxon>
        <taxon>Vertebrata</taxon>
        <taxon>Chondrichthyes</taxon>
        <taxon>Holocephali</taxon>
        <taxon>Chimaeriformes</taxon>
        <taxon>Chimaeridae</taxon>
        <taxon>Hydrolagus</taxon>
    </lineage>
</organism>
<feature type="peptide" id="PRO_0000044087" description="Oxytocin">
    <location>
        <begin position="1"/>
        <end position="9"/>
    </location>
</feature>
<feature type="modified residue" description="Glycine amide" evidence="1">
    <location>
        <position position="9"/>
    </location>
</feature>
<feature type="disulfide bond">
    <location>
        <begin position="1"/>
        <end position="6"/>
    </location>
</feature>
<evidence type="ECO:0000269" key="1">
    <source>
    </source>
</evidence>
<evidence type="ECO:0000305" key="2"/>
<comment type="function">
    <text>Oxytocin causes contraction of the smooth muscle of the uterus and of the mammary gland.</text>
</comment>
<comment type="subcellular location">
    <subcellularLocation>
        <location>Secreted</location>
    </subcellularLocation>
</comment>
<comment type="similarity">
    <text evidence="2">Belongs to the vasopressin/oxytocin family.</text>
</comment>
<accession>P69058</accession>
<accession>P01188</accession>
<accession>P32878</accession>
<sequence length="9" mass="1010">CYIQNCPLG</sequence>
<keyword id="KW-0027">Amidation</keyword>
<keyword id="KW-0903">Direct protein sequencing</keyword>
<keyword id="KW-1015">Disulfide bond</keyword>
<keyword id="KW-0372">Hormone</keyword>
<keyword id="KW-0964">Secreted</keyword>
<protein>
    <recommendedName>
        <fullName>Oxytocin</fullName>
    </recommendedName>
    <alternativeName>
        <fullName>Ocytocin</fullName>
    </alternativeName>
</protein>
<name>OXYT_HYDCO</name>
<reference key="1">
    <citation type="journal article" date="1969" name="J. Endocrinol.">
        <title>Oxytocin as a neurophyophysial hormone in the holocephalian elasmobranch fish, Hydrolagus collei.</title>
        <authorList>
            <person name="Pickering B.T."/>
            <person name="Heller H."/>
        </authorList>
    </citation>
    <scope>PROTEIN SEQUENCE</scope>
    <scope>AMIDATION AT GLY-9</scope>
</reference>
<dbReference type="PIR" id="A92774">
    <property type="entry name" value="A92774"/>
</dbReference>
<dbReference type="SMR" id="P69058"/>
<dbReference type="GO" id="GO:0005576">
    <property type="term" value="C:extracellular region"/>
    <property type="evidence" value="ECO:0007669"/>
    <property type="project" value="UniProtKB-SubCell"/>
</dbReference>
<dbReference type="GO" id="GO:0005185">
    <property type="term" value="F:neurohypophyseal hormone activity"/>
    <property type="evidence" value="ECO:0007669"/>
    <property type="project" value="InterPro"/>
</dbReference>
<dbReference type="InterPro" id="IPR022423">
    <property type="entry name" value="Neurohypophysial_hormone_CS"/>
</dbReference>
<dbReference type="Pfam" id="PF00220">
    <property type="entry name" value="Hormone_4"/>
    <property type="match status" value="1"/>
</dbReference>
<dbReference type="PROSITE" id="PS00264">
    <property type="entry name" value="NEUROHYPOPHYS_HORM"/>
    <property type="match status" value="1"/>
</dbReference>